<organism>
    <name type="scientific">Salmonella schwarzengrund (strain CVM19633)</name>
    <dbReference type="NCBI Taxonomy" id="439843"/>
    <lineage>
        <taxon>Bacteria</taxon>
        <taxon>Pseudomonadati</taxon>
        <taxon>Pseudomonadota</taxon>
        <taxon>Gammaproteobacteria</taxon>
        <taxon>Enterobacterales</taxon>
        <taxon>Enterobacteriaceae</taxon>
        <taxon>Salmonella</taxon>
    </lineage>
</organism>
<accession>B4TSH1</accession>
<dbReference type="EMBL" id="CP001127">
    <property type="protein sequence ID" value="ACF89908.1"/>
    <property type="molecule type" value="Genomic_DNA"/>
</dbReference>
<dbReference type="RefSeq" id="WP_000133618.1">
    <property type="nucleotide sequence ID" value="NC_011094.1"/>
</dbReference>
<dbReference type="SMR" id="B4TSH1"/>
<dbReference type="KEGG" id="sew:SeSA_A4649"/>
<dbReference type="HOGENOM" id="CLU_060699_3_2_6"/>
<dbReference type="Proteomes" id="UP000001865">
    <property type="component" value="Chromosome"/>
</dbReference>
<dbReference type="GO" id="GO:0005737">
    <property type="term" value="C:cytoplasm"/>
    <property type="evidence" value="ECO:0007669"/>
    <property type="project" value="UniProtKB-SubCell"/>
</dbReference>
<dbReference type="GO" id="GO:0003677">
    <property type="term" value="F:DNA binding"/>
    <property type="evidence" value="ECO:0007669"/>
    <property type="project" value="UniProtKB-KW"/>
</dbReference>
<dbReference type="GO" id="GO:0003700">
    <property type="term" value="F:DNA-binding transcription factor activity"/>
    <property type="evidence" value="ECO:0007669"/>
    <property type="project" value="InterPro"/>
</dbReference>
<dbReference type="GO" id="GO:0045892">
    <property type="term" value="P:negative regulation of DNA-templated transcription"/>
    <property type="evidence" value="ECO:0007669"/>
    <property type="project" value="UniProtKB-UniRule"/>
</dbReference>
<dbReference type="FunFam" id="1.10.10.10:FF:000160">
    <property type="entry name" value="HTH-type transcriptional regulator UlaR"/>
    <property type="match status" value="1"/>
</dbReference>
<dbReference type="Gene3D" id="1.10.10.10">
    <property type="entry name" value="Winged helix-like DNA-binding domain superfamily/Winged helix DNA-binding domain"/>
    <property type="match status" value="1"/>
</dbReference>
<dbReference type="HAMAP" id="MF_01563">
    <property type="entry name" value="HTH_type_UlaR"/>
    <property type="match status" value="1"/>
</dbReference>
<dbReference type="InterPro" id="IPR050313">
    <property type="entry name" value="Carb_Metab_HTH_regulators"/>
</dbReference>
<dbReference type="InterPro" id="IPR014036">
    <property type="entry name" value="DeoR-like_C"/>
</dbReference>
<dbReference type="InterPro" id="IPR001034">
    <property type="entry name" value="DeoR_HTH"/>
</dbReference>
<dbReference type="InterPro" id="IPR037171">
    <property type="entry name" value="NagB/RpiA_transferase-like"/>
</dbReference>
<dbReference type="InterPro" id="IPR018356">
    <property type="entry name" value="Tscrpt_reg_HTH_DeoR_CS"/>
</dbReference>
<dbReference type="InterPro" id="IPR023711">
    <property type="entry name" value="Tscrpt_reg_HTH_UlaR"/>
</dbReference>
<dbReference type="InterPro" id="IPR036388">
    <property type="entry name" value="WH-like_DNA-bd_sf"/>
</dbReference>
<dbReference type="InterPro" id="IPR036390">
    <property type="entry name" value="WH_DNA-bd_sf"/>
</dbReference>
<dbReference type="NCBIfam" id="NF010034">
    <property type="entry name" value="PRK13509.1"/>
    <property type="match status" value="1"/>
</dbReference>
<dbReference type="PANTHER" id="PTHR30363">
    <property type="entry name" value="HTH-TYPE TRANSCRIPTIONAL REGULATOR SRLR-RELATED"/>
    <property type="match status" value="1"/>
</dbReference>
<dbReference type="PANTHER" id="PTHR30363:SF55">
    <property type="entry name" value="HTH-TYPE TRANSCRIPTIONAL REGULATOR ULAR"/>
    <property type="match status" value="1"/>
</dbReference>
<dbReference type="Pfam" id="PF00455">
    <property type="entry name" value="DeoRC"/>
    <property type="match status" value="1"/>
</dbReference>
<dbReference type="Pfam" id="PF08220">
    <property type="entry name" value="HTH_DeoR"/>
    <property type="match status" value="1"/>
</dbReference>
<dbReference type="PRINTS" id="PR00037">
    <property type="entry name" value="HTHLACR"/>
</dbReference>
<dbReference type="SMART" id="SM01134">
    <property type="entry name" value="DeoRC"/>
    <property type="match status" value="1"/>
</dbReference>
<dbReference type="SMART" id="SM00420">
    <property type="entry name" value="HTH_DEOR"/>
    <property type="match status" value="1"/>
</dbReference>
<dbReference type="SUPFAM" id="SSF100950">
    <property type="entry name" value="NagB/RpiA/CoA transferase-like"/>
    <property type="match status" value="1"/>
</dbReference>
<dbReference type="SUPFAM" id="SSF46785">
    <property type="entry name" value="Winged helix' DNA-binding domain"/>
    <property type="match status" value="1"/>
</dbReference>
<dbReference type="PROSITE" id="PS00894">
    <property type="entry name" value="HTH_DEOR_1"/>
    <property type="match status" value="1"/>
</dbReference>
<dbReference type="PROSITE" id="PS51000">
    <property type="entry name" value="HTH_DEOR_2"/>
    <property type="match status" value="1"/>
</dbReference>
<name>ULAR_SALSV</name>
<gene>
    <name evidence="1" type="primary">ulaR</name>
    <name type="ordered locus">SeSA_A4649</name>
</gene>
<proteinExistence type="inferred from homology"/>
<evidence type="ECO:0000255" key="1">
    <source>
        <dbReference type="HAMAP-Rule" id="MF_01563"/>
    </source>
</evidence>
<sequence>MTEAQRHQILLDMLAQLGFVTVENVIERLGISPATARRDINKLDESGKLKKVRNGAEAITQQRPRWTPMNLHQAQNHDEKVRIAKAASQLVNPGESVVINCGSTAFLLGREMCGKPVQIITNYLPLANYLIDQEHDSVIIMGGQYNKSQSITLSPQGSENSLYAGHWMFTSGKGLTADGLYKTDMLTAMAEQKMLSVVGKLVALVDSSKIGERAGMLFSRADQIAMLITGKNANPQVLQQLEAQGVSILRV</sequence>
<reference key="1">
    <citation type="journal article" date="2011" name="J. Bacteriol.">
        <title>Comparative genomics of 28 Salmonella enterica isolates: evidence for CRISPR-mediated adaptive sublineage evolution.</title>
        <authorList>
            <person name="Fricke W.F."/>
            <person name="Mammel M.K."/>
            <person name="McDermott P.F."/>
            <person name="Tartera C."/>
            <person name="White D.G."/>
            <person name="Leclerc J.E."/>
            <person name="Ravel J."/>
            <person name="Cebula T.A."/>
        </authorList>
    </citation>
    <scope>NUCLEOTIDE SEQUENCE [LARGE SCALE GENOMIC DNA]</scope>
    <source>
        <strain>CVM19633</strain>
    </source>
</reference>
<feature type="chain" id="PRO_1000147173" description="HTH-type transcriptional regulator UlaR">
    <location>
        <begin position="1"/>
        <end position="251"/>
    </location>
</feature>
<feature type="domain" description="HTH deoR-type" evidence="1">
    <location>
        <begin position="3"/>
        <end position="58"/>
    </location>
</feature>
<feature type="DNA-binding region" description="H-T-H motif" evidence="1">
    <location>
        <begin position="20"/>
        <end position="39"/>
    </location>
</feature>
<keyword id="KW-0963">Cytoplasm</keyword>
<keyword id="KW-0238">DNA-binding</keyword>
<keyword id="KW-0678">Repressor</keyword>
<keyword id="KW-0804">Transcription</keyword>
<keyword id="KW-0805">Transcription regulation</keyword>
<protein>
    <recommendedName>
        <fullName evidence="1">HTH-type transcriptional regulator UlaR</fullName>
    </recommendedName>
</protein>
<comment type="function">
    <text evidence="1">Represses ulaG and the ulaABCDEF operon.</text>
</comment>
<comment type="subcellular location">
    <subcellularLocation>
        <location evidence="1">Cytoplasm</location>
    </subcellularLocation>
</comment>